<dbReference type="EMBL" id="CR380947">
    <property type="protein sequence ID" value="CAG57856.1"/>
    <property type="molecule type" value="Genomic_DNA"/>
</dbReference>
<dbReference type="RefSeq" id="XP_444963.1">
    <property type="nucleotide sequence ID" value="XM_444963.1"/>
</dbReference>
<dbReference type="SMR" id="Q6FXS6"/>
<dbReference type="FunCoup" id="Q6FXS6">
    <property type="interactions" value="358"/>
</dbReference>
<dbReference type="STRING" id="284593.Q6FXS6"/>
<dbReference type="EnsemblFungi" id="CAGL0A04499g-T">
    <property type="protein sequence ID" value="CAGL0A04499g-T-p1"/>
    <property type="gene ID" value="CAGL0A04499g"/>
</dbReference>
<dbReference type="KEGG" id="cgr:2886339"/>
<dbReference type="CGD" id="CAL0126843">
    <property type="gene designation" value="CAGL0A04499g"/>
</dbReference>
<dbReference type="VEuPathDB" id="FungiDB:B1J91_A04499g"/>
<dbReference type="VEuPathDB" id="FungiDB:CAGL0A04499g"/>
<dbReference type="eggNOG" id="KOG2923">
    <property type="taxonomic scope" value="Eukaryota"/>
</dbReference>
<dbReference type="HOGENOM" id="CLU_155991_4_1_1"/>
<dbReference type="InParanoid" id="Q6FXS6"/>
<dbReference type="OMA" id="LFTYPCP"/>
<dbReference type="UniPathway" id="UPA00559"/>
<dbReference type="Proteomes" id="UP000002428">
    <property type="component" value="Chromosome A"/>
</dbReference>
<dbReference type="GO" id="GO:0005829">
    <property type="term" value="C:cytosol"/>
    <property type="evidence" value="ECO:0007669"/>
    <property type="project" value="EnsemblFungi"/>
</dbReference>
<dbReference type="GO" id="GO:0005634">
    <property type="term" value="C:nucleus"/>
    <property type="evidence" value="ECO:0007669"/>
    <property type="project" value="UniProtKB-SubCell"/>
</dbReference>
<dbReference type="GO" id="GO:0090560">
    <property type="term" value="F:2-(3-amino-3-carboxypropyl)histidine synthase activity"/>
    <property type="evidence" value="ECO:0007669"/>
    <property type="project" value="EnsemblFungi"/>
</dbReference>
<dbReference type="GO" id="GO:0008198">
    <property type="term" value="F:ferrous iron binding"/>
    <property type="evidence" value="ECO:0000250"/>
    <property type="project" value="UniProtKB"/>
</dbReference>
<dbReference type="GO" id="GO:0034986">
    <property type="term" value="F:iron chaperone activity"/>
    <property type="evidence" value="ECO:0000250"/>
    <property type="project" value="UniProtKB"/>
</dbReference>
<dbReference type="GO" id="GO:0016730">
    <property type="term" value="F:oxidoreductase activity, acting on iron-sulfur proteins as donors"/>
    <property type="evidence" value="ECO:0007669"/>
    <property type="project" value="EnsemblFungi"/>
</dbReference>
<dbReference type="GO" id="GO:0008270">
    <property type="term" value="F:zinc ion binding"/>
    <property type="evidence" value="ECO:0007669"/>
    <property type="project" value="EnsemblFungi"/>
</dbReference>
<dbReference type="GO" id="GO:0017183">
    <property type="term" value="P:protein histidyl modification to diphthamide"/>
    <property type="evidence" value="ECO:0000250"/>
    <property type="project" value="UniProtKB"/>
</dbReference>
<dbReference type="GO" id="GO:0002926">
    <property type="term" value="P:tRNA wobble base 5-methoxycarbonylmethyl-2-thiouridinylation"/>
    <property type="evidence" value="ECO:0000250"/>
    <property type="project" value="UniProtKB"/>
</dbReference>
<dbReference type="FunFam" id="3.10.660.10:FF:000001">
    <property type="entry name" value="Diphthamide biosynthesis 3"/>
    <property type="match status" value="1"/>
</dbReference>
<dbReference type="Gene3D" id="3.10.660.10">
    <property type="entry name" value="DPH Zinc finger"/>
    <property type="match status" value="1"/>
</dbReference>
<dbReference type="InterPro" id="IPR044248">
    <property type="entry name" value="DPH3/4-like"/>
</dbReference>
<dbReference type="InterPro" id="IPR007872">
    <property type="entry name" value="DPH_MB_dom"/>
</dbReference>
<dbReference type="InterPro" id="IPR036671">
    <property type="entry name" value="DPH_MB_sf"/>
</dbReference>
<dbReference type="PANTHER" id="PTHR21454:SF31">
    <property type="entry name" value="DIPHTHAMIDE BIOSYNTHESIS PROTEIN 3"/>
    <property type="match status" value="1"/>
</dbReference>
<dbReference type="PANTHER" id="PTHR21454">
    <property type="entry name" value="DPH3 HOMOLOG-RELATED"/>
    <property type="match status" value="1"/>
</dbReference>
<dbReference type="Pfam" id="PF05207">
    <property type="entry name" value="Zn_ribbon_CSL"/>
    <property type="match status" value="1"/>
</dbReference>
<dbReference type="SUPFAM" id="SSF144217">
    <property type="entry name" value="CSL zinc finger"/>
    <property type="match status" value="1"/>
</dbReference>
<dbReference type="PROSITE" id="PS51074">
    <property type="entry name" value="DPH_MB"/>
    <property type="match status" value="1"/>
</dbReference>
<name>DPH3_CANGA</name>
<gene>
    <name type="primary">DPH3</name>
    <name type="ordered locus">CAGL0A04499g</name>
</gene>
<comment type="function">
    <text evidence="2">Required for the first step of diphthamide biosynthesis, a post-translational modification of histidine which occurs in elongation factor 2. DPH1 and DPH2 transfer a 3-amino-3-carboxypropyl (ACP) group from S-adenosyl-L-methionine (SAM) to a histidine residue, the reaction is assisted by a reduction system comprising KTI11/DPH3 and a NADH-dependent reductase, predominantly CBR1. Acts as an electron donor to reduce the Fe-S cluster in DPH1-DPH2 keeping the [4Fe-4S] clusters in the active and reduced state. Restores iron to DPH1-DPH2 iron-sulfur clusters which have degraded from [4Fe-4S] to [3Fe-4S] by donating an iron atom to reform [4Fe-4S] clusters, in a manner dependent on the presence of elongation factor 2 and SAM. Associates with the elongator complex and is required for tRNA Wobble base modifications mediated by the elongator complex. The elongator complex is required for multiple tRNA modifications, including mcm5U (5-methoxycarbonylmethyl uridine), mcm5s 2U (5-methoxycarbonylmethyl-2-thiouridine), and ncm5U (5-carbamoylmethyl uridine).</text>
</comment>
<comment type="catalytic activity">
    <reaction evidence="2">
        <text>[3Fe-4S](1+)-[protein] + Fe(2+)-[Dph3] = [3Fe-4S](0)-[protein] + Fe(3+)-[Dph3]</text>
        <dbReference type="Rhea" id="RHEA:71235"/>
        <dbReference type="Rhea" id="RHEA-COMP:17996"/>
        <dbReference type="Rhea" id="RHEA-COMP:17997"/>
        <dbReference type="Rhea" id="RHEA-COMP:18002"/>
        <dbReference type="Rhea" id="RHEA-COMP:18003"/>
        <dbReference type="ChEBI" id="CHEBI:29033"/>
        <dbReference type="ChEBI" id="CHEBI:29034"/>
        <dbReference type="ChEBI" id="CHEBI:33751"/>
        <dbReference type="ChEBI" id="CHEBI:47402"/>
        <dbReference type="ChEBI" id="CHEBI:83228"/>
    </reaction>
</comment>
<comment type="catalytic activity">
    <reaction evidence="2">
        <text>2 [3Fe-4S](0)-[protein] + 2 Fe(2+)-[Dph3] + NADH = 2 [4Fe-4S](1+)-[protein] + 2 [Dph3] + NAD(+) + H(+)</text>
        <dbReference type="Rhea" id="RHEA:71239"/>
        <dbReference type="Rhea" id="RHEA-COMP:17997"/>
        <dbReference type="Rhea" id="RHEA-COMP:17998"/>
        <dbReference type="Rhea" id="RHEA-COMP:18001"/>
        <dbReference type="Rhea" id="RHEA-COMP:18002"/>
        <dbReference type="ChEBI" id="CHEBI:15378"/>
        <dbReference type="ChEBI" id="CHEBI:29033"/>
        <dbReference type="ChEBI" id="CHEBI:33723"/>
        <dbReference type="ChEBI" id="CHEBI:47402"/>
        <dbReference type="ChEBI" id="CHEBI:57540"/>
        <dbReference type="ChEBI" id="CHEBI:57945"/>
        <dbReference type="ChEBI" id="CHEBI:83228"/>
    </reaction>
</comment>
<comment type="cofactor">
    <cofactor evidence="2">
        <name>Fe(2+)</name>
        <dbReference type="ChEBI" id="CHEBI:29033"/>
    </cofactor>
</comment>
<comment type="pathway">
    <text evidence="2">Protein modification; peptidyl-diphthamide biosynthesis.</text>
</comment>
<comment type="subunit">
    <text evidence="2">Component of the 2-(3-amino-3-carboxypropyl)histidine synthase complex composed of DPH1, DPH2, DPH3 and a NADH-dependent reductase, predominantly CBR1.</text>
</comment>
<comment type="subcellular location">
    <subcellularLocation>
        <location evidence="1">Cytoplasm</location>
    </subcellularLocation>
    <subcellularLocation>
        <location evidence="1">Nucleus</location>
    </subcellularLocation>
</comment>
<comment type="domain">
    <text evidence="2">The DPH-type metal-binding (MB) domain can also bind zinc. However, iron is the physiological binding partner as zinc binding impairs the protein electron donor function.</text>
</comment>
<comment type="similarity">
    <text evidence="4">Belongs to the DPH3 family.</text>
</comment>
<accession>Q6FXS6</accession>
<proteinExistence type="inferred from homology"/>
<reference key="1">
    <citation type="journal article" date="2004" name="Nature">
        <title>Genome evolution in yeasts.</title>
        <authorList>
            <person name="Dujon B."/>
            <person name="Sherman D."/>
            <person name="Fischer G."/>
            <person name="Durrens P."/>
            <person name="Casaregola S."/>
            <person name="Lafontaine I."/>
            <person name="de Montigny J."/>
            <person name="Marck C."/>
            <person name="Neuveglise C."/>
            <person name="Talla E."/>
            <person name="Goffard N."/>
            <person name="Frangeul L."/>
            <person name="Aigle M."/>
            <person name="Anthouard V."/>
            <person name="Babour A."/>
            <person name="Barbe V."/>
            <person name="Barnay S."/>
            <person name="Blanchin S."/>
            <person name="Beckerich J.-M."/>
            <person name="Beyne E."/>
            <person name="Bleykasten C."/>
            <person name="Boisrame A."/>
            <person name="Boyer J."/>
            <person name="Cattolico L."/>
            <person name="Confanioleri F."/>
            <person name="de Daruvar A."/>
            <person name="Despons L."/>
            <person name="Fabre E."/>
            <person name="Fairhead C."/>
            <person name="Ferry-Dumazet H."/>
            <person name="Groppi A."/>
            <person name="Hantraye F."/>
            <person name="Hennequin C."/>
            <person name="Jauniaux N."/>
            <person name="Joyet P."/>
            <person name="Kachouri R."/>
            <person name="Kerrest A."/>
            <person name="Koszul R."/>
            <person name="Lemaire M."/>
            <person name="Lesur I."/>
            <person name="Ma L."/>
            <person name="Muller H."/>
            <person name="Nicaud J.-M."/>
            <person name="Nikolski M."/>
            <person name="Oztas S."/>
            <person name="Ozier-Kalogeropoulos O."/>
            <person name="Pellenz S."/>
            <person name="Potier S."/>
            <person name="Richard G.-F."/>
            <person name="Straub M.-L."/>
            <person name="Suleau A."/>
            <person name="Swennen D."/>
            <person name="Tekaia F."/>
            <person name="Wesolowski-Louvel M."/>
            <person name="Westhof E."/>
            <person name="Wirth B."/>
            <person name="Zeniou-Meyer M."/>
            <person name="Zivanovic Y."/>
            <person name="Bolotin-Fukuhara M."/>
            <person name="Thierry A."/>
            <person name="Bouchier C."/>
            <person name="Caudron B."/>
            <person name="Scarpelli C."/>
            <person name="Gaillardin C."/>
            <person name="Weissenbach J."/>
            <person name="Wincker P."/>
            <person name="Souciet J.-L."/>
        </authorList>
    </citation>
    <scope>NUCLEOTIDE SEQUENCE [LARGE SCALE GENOMIC DNA]</scope>
    <source>
        <strain>ATCC 2001 / BCRC 20586 / JCM 3761 / NBRC 0622 / NRRL Y-65 / CBS 138</strain>
    </source>
</reference>
<organism>
    <name type="scientific">Candida glabrata (strain ATCC 2001 / BCRC 20586 / JCM 3761 / NBRC 0622 / NRRL Y-65 / CBS 138)</name>
    <name type="common">Yeast</name>
    <name type="synonym">Nakaseomyces glabratus</name>
    <dbReference type="NCBI Taxonomy" id="284593"/>
    <lineage>
        <taxon>Eukaryota</taxon>
        <taxon>Fungi</taxon>
        <taxon>Dikarya</taxon>
        <taxon>Ascomycota</taxon>
        <taxon>Saccharomycotina</taxon>
        <taxon>Saccharomycetes</taxon>
        <taxon>Saccharomycetales</taxon>
        <taxon>Saccharomycetaceae</taxon>
        <taxon>Nakaseomyces</taxon>
    </lineage>
</organism>
<keyword id="KW-0963">Cytoplasm</keyword>
<keyword id="KW-0408">Iron</keyword>
<keyword id="KW-0479">Metal-binding</keyword>
<keyword id="KW-0539">Nucleus</keyword>
<keyword id="KW-0560">Oxidoreductase</keyword>
<keyword id="KW-1185">Reference proteome</keyword>
<sequence>MSTYDQIEIEDMTFHPDSQMFTYPCPCGDRFQILLDDMFDGEAIAVCPSCSLMIDVIFEKEDLDEYYEEAGIAPPQPIAAAA</sequence>
<feature type="chain" id="PRO_0000082628" description="Diphthamide biosynthesis protein 3">
    <location>
        <begin position="1"/>
        <end position="82"/>
    </location>
</feature>
<feature type="domain" description="DPH-type MB" evidence="3">
    <location>
        <begin position="3"/>
        <end position="59"/>
    </location>
</feature>
<feature type="binding site" evidence="2">
    <location>
        <position position="25"/>
    </location>
    <ligand>
        <name>Fe cation</name>
        <dbReference type="ChEBI" id="CHEBI:24875"/>
    </ligand>
</feature>
<feature type="binding site" evidence="2">
    <location>
        <position position="27"/>
    </location>
    <ligand>
        <name>Fe cation</name>
        <dbReference type="ChEBI" id="CHEBI:24875"/>
    </ligand>
</feature>
<feature type="binding site" evidence="2">
    <location>
        <position position="47"/>
    </location>
    <ligand>
        <name>Fe cation</name>
        <dbReference type="ChEBI" id="CHEBI:24875"/>
    </ligand>
</feature>
<feature type="binding site" evidence="2">
    <location>
        <position position="50"/>
    </location>
    <ligand>
        <name>Fe cation</name>
        <dbReference type="ChEBI" id="CHEBI:24875"/>
    </ligand>
</feature>
<evidence type="ECO:0000250" key="1"/>
<evidence type="ECO:0000250" key="2">
    <source>
        <dbReference type="UniProtKB" id="Q3E840"/>
    </source>
</evidence>
<evidence type="ECO:0000255" key="3">
    <source>
        <dbReference type="PROSITE-ProRule" id="PRU00456"/>
    </source>
</evidence>
<evidence type="ECO:0000305" key="4"/>
<protein>
    <recommendedName>
        <fullName>Diphthamide biosynthesis protein 3</fullName>
    </recommendedName>
</protein>